<dbReference type="EMBL" id="AC134908">
    <property type="status" value="NOT_ANNOTATED_CDS"/>
    <property type="molecule type" value="Genomic_DNA"/>
</dbReference>
<dbReference type="CCDS" id="CCDS50035.1"/>
<dbReference type="RefSeq" id="NP_001159401.1">
    <property type="nucleotide sequence ID" value="NM_001165929.1"/>
</dbReference>
<dbReference type="SMR" id="D3Z5T1"/>
<dbReference type="FunCoup" id="D3Z5T1">
    <property type="interactions" value="94"/>
</dbReference>
<dbReference type="STRING" id="10090.ENSMUSP00000093155"/>
<dbReference type="GlyGen" id="D3Z5T1">
    <property type="glycosylation" value="1 site, 1 O-linked glycan (1 site)"/>
</dbReference>
<dbReference type="PhosphoSitePlus" id="D3Z5T1"/>
<dbReference type="PaxDb" id="10090-ENSMUSP00000093155"/>
<dbReference type="ProteomicsDB" id="265718"/>
<dbReference type="Antibodypedia" id="22861">
    <property type="antibodies" value="25 antibodies from 13 providers"/>
</dbReference>
<dbReference type="Ensembl" id="ENSMUST00000095500.5">
    <property type="protein sequence ID" value="ENSMUSP00000093155.5"/>
    <property type="gene ID" value="ENSMUSG00000071202.6"/>
</dbReference>
<dbReference type="GeneID" id="381077"/>
<dbReference type="KEGG" id="mmu:381077"/>
<dbReference type="UCSC" id="uc012ank.1">
    <property type="organism name" value="mouse"/>
</dbReference>
<dbReference type="AGR" id="MGI:2685784"/>
<dbReference type="CTD" id="124093"/>
<dbReference type="MGI" id="MGI:2685784">
    <property type="gene designation" value="Ccdc78"/>
</dbReference>
<dbReference type="VEuPathDB" id="HostDB:ENSMUSG00000071202"/>
<dbReference type="eggNOG" id="ENOG502R5JQ">
    <property type="taxonomic scope" value="Eukaryota"/>
</dbReference>
<dbReference type="GeneTree" id="ENSGT00390000013678"/>
<dbReference type="HOGENOM" id="CLU_032909_0_0_1"/>
<dbReference type="InParanoid" id="D3Z5T1"/>
<dbReference type="OMA" id="WAGTSKK"/>
<dbReference type="OrthoDB" id="2113965at2759"/>
<dbReference type="PhylomeDB" id="D3Z5T1"/>
<dbReference type="TreeFam" id="TF336362"/>
<dbReference type="BioGRID-ORCS" id="381077">
    <property type="hits" value="0 hits in 79 CRISPR screens"/>
</dbReference>
<dbReference type="PRO" id="PR:D3Z5T1"/>
<dbReference type="Proteomes" id="UP000000589">
    <property type="component" value="Chromosome 17"/>
</dbReference>
<dbReference type="RNAct" id="D3Z5T1">
    <property type="molecule type" value="protein"/>
</dbReference>
<dbReference type="Bgee" id="ENSMUSG00000071202">
    <property type="expression patterns" value="Expressed in ovary and 43 other cell types or tissues"/>
</dbReference>
<dbReference type="GO" id="GO:0005814">
    <property type="term" value="C:centriole"/>
    <property type="evidence" value="ECO:0000250"/>
    <property type="project" value="UniProtKB"/>
</dbReference>
<dbReference type="GO" id="GO:0005737">
    <property type="term" value="C:cytoplasm"/>
    <property type="evidence" value="ECO:0000314"/>
    <property type="project" value="UniProtKB"/>
</dbReference>
<dbReference type="GO" id="GO:0098536">
    <property type="term" value="C:deuterosome"/>
    <property type="evidence" value="ECO:0000250"/>
    <property type="project" value="UniProtKB"/>
</dbReference>
<dbReference type="GO" id="GO:0048471">
    <property type="term" value="C:perinuclear region of cytoplasm"/>
    <property type="evidence" value="ECO:0000250"/>
    <property type="project" value="UniProtKB"/>
</dbReference>
<dbReference type="GO" id="GO:0042383">
    <property type="term" value="C:sarcolemma"/>
    <property type="evidence" value="ECO:0000250"/>
    <property type="project" value="UniProtKB"/>
</dbReference>
<dbReference type="GO" id="GO:0016529">
    <property type="term" value="C:sarcoplasmic reticulum"/>
    <property type="evidence" value="ECO:0000250"/>
    <property type="project" value="UniProtKB"/>
</dbReference>
<dbReference type="GO" id="GO:0030030">
    <property type="term" value="P:cell projection organization"/>
    <property type="evidence" value="ECO:0007669"/>
    <property type="project" value="UniProtKB-KW"/>
</dbReference>
<dbReference type="GO" id="GO:0098535">
    <property type="term" value="P:de novo centriole assembly involved in multi-ciliated epithelial cell differentiation"/>
    <property type="evidence" value="ECO:0000250"/>
    <property type="project" value="UniProtKB"/>
</dbReference>
<dbReference type="GO" id="GO:0003009">
    <property type="term" value="P:skeletal muscle contraction"/>
    <property type="evidence" value="ECO:0000250"/>
    <property type="project" value="UniProtKB"/>
</dbReference>
<dbReference type="InterPro" id="IPR039873">
    <property type="entry name" value="CCDC78"/>
</dbReference>
<dbReference type="InterPro" id="IPR029329">
    <property type="entry name" value="DUF4472"/>
</dbReference>
<dbReference type="PANTHER" id="PTHR22106">
    <property type="entry name" value="COILED-COIL DOMAIN-CONTAINING PROTEIN 78"/>
    <property type="match status" value="1"/>
</dbReference>
<dbReference type="PANTHER" id="PTHR22106:SF5">
    <property type="entry name" value="COILED-COIL DOMAIN-CONTAINING PROTEIN 78"/>
    <property type="match status" value="1"/>
</dbReference>
<dbReference type="Pfam" id="PF14739">
    <property type="entry name" value="DUF4472"/>
    <property type="match status" value="1"/>
</dbReference>
<evidence type="ECO:0000250" key="1"/>
<evidence type="ECO:0000255" key="2"/>
<evidence type="ECO:0000305" key="3"/>
<feature type="chain" id="PRO_0000415805" description="Coiled-coil domain-containing protein 78">
    <location>
        <begin position="1"/>
        <end position="437"/>
    </location>
</feature>
<feature type="coiled-coil region" evidence="2">
    <location>
        <begin position="83"/>
        <end position="114"/>
    </location>
</feature>
<feature type="coiled-coil region" evidence="2">
    <location>
        <begin position="147"/>
        <end position="287"/>
    </location>
</feature>
<feature type="coiled-coil region" evidence="2">
    <location>
        <begin position="360"/>
        <end position="408"/>
    </location>
</feature>
<sequence>MDQRPELLSSMEYVASPDPKPGVPLRVAENVAPGAEDWLPSASGHLAWATSLETEHQTHLELSEEQRLQISKELVDLQIATHHLREQHEAEVFELRREILRLESRVLELELHGNGACQGHKVQPMANLGQHQVPPLEPPGGQQKLQEELKWLLEHHRARQQALETQVGVLSQQLQGAREEARTTGQQLASQAMVLASCKGQLRQAEAENTQLQLQLKKMNEEYAVRLQHYARETVENASSTNQAALQAFLESTLQDIRAAHRTREQQLAQAARTYRKRLADLNQRQELLLTTCRATFATAINLEPLPMHWATELSHPRENEYGRHRTLLLYPEKGSGETSKENKSQPLALDTASWAQIQQRLQDFSQDTQAELERERAQLMVRATMAEQQLSELQEYVDQHLGRYKQEILKLRKLVNIGDPQGVEAVSSPGSGGARL</sequence>
<accession>D3Z5T1</accession>
<reference key="1">
    <citation type="journal article" date="2009" name="PLoS Biol.">
        <title>Lineage-specific biology revealed by a finished genome assembly of the mouse.</title>
        <authorList>
            <person name="Church D.M."/>
            <person name="Goodstadt L."/>
            <person name="Hillier L.W."/>
            <person name="Zody M.C."/>
            <person name="Goldstein S."/>
            <person name="She X."/>
            <person name="Bult C.J."/>
            <person name="Agarwala R."/>
            <person name="Cherry J.L."/>
            <person name="DiCuccio M."/>
            <person name="Hlavina W."/>
            <person name="Kapustin Y."/>
            <person name="Meric P."/>
            <person name="Maglott D."/>
            <person name="Birtle Z."/>
            <person name="Marques A.C."/>
            <person name="Graves T."/>
            <person name="Zhou S."/>
            <person name="Teague B."/>
            <person name="Potamousis K."/>
            <person name="Churas C."/>
            <person name="Place M."/>
            <person name="Herschleb J."/>
            <person name="Runnheim R."/>
            <person name="Forrest D."/>
            <person name="Amos-Landgraf J."/>
            <person name="Schwartz D.C."/>
            <person name="Cheng Z."/>
            <person name="Lindblad-Toh K."/>
            <person name="Eichler E.E."/>
            <person name="Ponting C.P."/>
        </authorList>
    </citation>
    <scope>NUCLEOTIDE SEQUENCE [LARGE SCALE GENOMIC DNA]</scope>
    <source>
        <strain>C57BL/6J</strain>
    </source>
</reference>
<gene>
    <name type="primary">Ccdc78</name>
</gene>
<protein>
    <recommendedName>
        <fullName>Coiled-coil domain-containing protein 78</fullName>
    </recommendedName>
</protein>
<comment type="function">
    <text evidence="1">Component of the deuterosome, a structure that promotes de novo centriole amplification in multiciliated cells that can generate more than 100 centrioles. Deuterosome-mediated centriole amplification occurs in terminally differentiated multiciliated cells (G1/0) and not in S phase. Essential for centriole amplification and is required for CEP152 localization to the deuterosome (By similarity).</text>
</comment>
<comment type="subcellular location">
    <subcellularLocation>
        <location evidence="1">Cytoplasm</location>
        <location evidence="1">Cytoskeleton</location>
        <location evidence="1">Microtubule organizing center</location>
        <location evidence="1">Centrosome</location>
        <location evidence="1">Centriole</location>
    </subcellularLocation>
    <subcellularLocation>
        <location evidence="1">Cytoplasm</location>
        <location evidence="1">Perinuclear region</location>
    </subcellularLocation>
    <subcellularLocation>
        <location evidence="1">Cell membrane</location>
        <location evidence="1">Sarcolemma</location>
    </subcellularLocation>
    <subcellularLocation>
        <location evidence="1">Sarcoplasmic reticulum</location>
    </subcellularLocation>
    <text evidence="1">Localizes to centrioles and deuterosome. Found primarily in the perinuclear region as well as along the sarcolemmal membrane and in reticular pattern within the sarcoplasm (By similarity).</text>
</comment>
<comment type="similarity">
    <text evidence="3">Belongs to the CCDC78 family.</text>
</comment>
<organism>
    <name type="scientific">Mus musculus</name>
    <name type="common">Mouse</name>
    <dbReference type="NCBI Taxonomy" id="10090"/>
    <lineage>
        <taxon>Eukaryota</taxon>
        <taxon>Metazoa</taxon>
        <taxon>Chordata</taxon>
        <taxon>Craniata</taxon>
        <taxon>Vertebrata</taxon>
        <taxon>Euteleostomi</taxon>
        <taxon>Mammalia</taxon>
        <taxon>Eutheria</taxon>
        <taxon>Euarchontoglires</taxon>
        <taxon>Glires</taxon>
        <taxon>Rodentia</taxon>
        <taxon>Myomorpha</taxon>
        <taxon>Muroidea</taxon>
        <taxon>Muridae</taxon>
        <taxon>Murinae</taxon>
        <taxon>Mus</taxon>
        <taxon>Mus</taxon>
    </lineage>
</organism>
<proteinExistence type="inferred from homology"/>
<keyword id="KW-1003">Cell membrane</keyword>
<keyword id="KW-0970">Cilium biogenesis/degradation</keyword>
<keyword id="KW-0175">Coiled coil</keyword>
<keyword id="KW-0963">Cytoplasm</keyword>
<keyword id="KW-0206">Cytoskeleton</keyword>
<keyword id="KW-0472">Membrane</keyword>
<keyword id="KW-1185">Reference proteome</keyword>
<keyword id="KW-0703">Sarcoplasmic reticulum</keyword>
<name>CCD78_MOUSE</name>